<organism>
    <name type="scientific">Paraburkholderia xenovorans (strain LB400)</name>
    <dbReference type="NCBI Taxonomy" id="266265"/>
    <lineage>
        <taxon>Bacteria</taxon>
        <taxon>Pseudomonadati</taxon>
        <taxon>Pseudomonadota</taxon>
        <taxon>Betaproteobacteria</taxon>
        <taxon>Burkholderiales</taxon>
        <taxon>Burkholderiaceae</taxon>
        <taxon>Paraburkholderia</taxon>
    </lineage>
</organism>
<protein>
    <recommendedName>
        <fullName evidence="1">tRNA 5-methylaminomethyl-2-thiouridine biosynthesis bifunctional protein MnmC</fullName>
        <shortName evidence="1">tRNA mnm(5)s(2)U biosynthesis bifunctional protein</shortName>
    </recommendedName>
    <domain>
        <recommendedName>
            <fullName evidence="1">tRNA (mnm(5)s(2)U34)-methyltransferase</fullName>
            <ecNumber evidence="1">2.1.1.61</ecNumber>
        </recommendedName>
    </domain>
    <domain>
        <recommendedName>
            <fullName evidence="1">FAD-dependent cmnm(5)s(2)U34 oxidoreductase</fullName>
            <ecNumber evidence="1">1.5.-.-</ecNumber>
        </recommendedName>
    </domain>
</protein>
<reference key="1">
    <citation type="journal article" date="2006" name="Proc. Natl. Acad. Sci. U.S.A.">
        <title>Burkholderia xenovorans LB400 harbors a multi-replicon, 9.73-Mbp genome shaped for versatility.</title>
        <authorList>
            <person name="Chain P.S.G."/>
            <person name="Denef V.J."/>
            <person name="Konstantinidis K.T."/>
            <person name="Vergez L.M."/>
            <person name="Agullo L."/>
            <person name="Reyes V.L."/>
            <person name="Hauser L."/>
            <person name="Cordova M."/>
            <person name="Gomez L."/>
            <person name="Gonzalez M."/>
            <person name="Land M."/>
            <person name="Lao V."/>
            <person name="Larimer F."/>
            <person name="LiPuma J.J."/>
            <person name="Mahenthiralingam E."/>
            <person name="Malfatti S.A."/>
            <person name="Marx C.J."/>
            <person name="Parnell J.J."/>
            <person name="Ramette A."/>
            <person name="Richardson P."/>
            <person name="Seeger M."/>
            <person name="Smith D."/>
            <person name="Spilker T."/>
            <person name="Sul W.J."/>
            <person name="Tsoi T.V."/>
            <person name="Ulrich L.E."/>
            <person name="Zhulin I.B."/>
            <person name="Tiedje J.M."/>
        </authorList>
    </citation>
    <scope>NUCLEOTIDE SEQUENCE [LARGE SCALE GENOMIC DNA]</scope>
    <source>
        <strain>LB400</strain>
    </source>
</reference>
<accession>Q13SL2</accession>
<sequence>MTDPLIPAVLAFRANGTPFSPLYDDIYHSAVGGLEQAHYVFLRGNALPERWQERRVFTVVETGFGMGINFLVTWAAWRADSSRCERLHFVSTEKHPFTVDDLRKVYAATISDPEIAALAQALADAWPMLVPGTHRLEFEEGRVVLTLVFADAQDSVPALRLRADAFYLDGFAPARNPELWTSAIFKALARLAGEGATFATYSSAGDIKRALTQCGFEYRKVDGFGWKRAMLVGRFAPRWRVRRHEPPAPLVVDERHAVVIGTGLAGCAVIERLAARGWRVTSLERHAAVAQEASGNPAGVFHPMISRDDSVASRVTRTGFLYSLRHWAALERLGYGPSRGSKGLLQIAADDEEALSISQAIAAASYPSEYVTSVPADEAQRLAGMPLAHGGWFFPYGGWIDPASLCAAQCAAAGPLLERRFGVDVARIERAGGQWIVFDTAGQVVARAPVVIVASAHDAARIAGLQYAPTRSIRGQLTLLPAGTVRPPLELPVIGEGYAVPLANGATLTGATYELDDPDTSLRTDGHLENLARVAQMLPAFAGIVDRADPAALAGRVAFRCVTSDRMPMIGQLADETVAARDAQRLRGAWPLDLPRTDGLYGAFAYGSRGLVWAALGAELIASQLEGEPWPLERDLAEDIDPARFLLRALRQGTVS</sequence>
<keyword id="KW-0963">Cytoplasm</keyword>
<keyword id="KW-0274">FAD</keyword>
<keyword id="KW-0285">Flavoprotein</keyword>
<keyword id="KW-0489">Methyltransferase</keyword>
<keyword id="KW-0511">Multifunctional enzyme</keyword>
<keyword id="KW-0560">Oxidoreductase</keyword>
<keyword id="KW-1185">Reference proteome</keyword>
<keyword id="KW-0949">S-adenosyl-L-methionine</keyword>
<keyword id="KW-0808">Transferase</keyword>
<keyword id="KW-0819">tRNA processing</keyword>
<name>MNMC_PARXL</name>
<evidence type="ECO:0000255" key="1">
    <source>
        <dbReference type="HAMAP-Rule" id="MF_01102"/>
    </source>
</evidence>
<proteinExistence type="inferred from homology"/>
<dbReference type="EC" id="2.1.1.61" evidence="1"/>
<dbReference type="EC" id="1.5.-.-" evidence="1"/>
<dbReference type="EMBL" id="CP000270">
    <property type="protein sequence ID" value="ABE32927.1"/>
    <property type="molecule type" value="Genomic_DNA"/>
</dbReference>
<dbReference type="RefSeq" id="WP_011490324.1">
    <property type="nucleotide sequence ID" value="NC_007951.1"/>
</dbReference>
<dbReference type="SMR" id="Q13SL2"/>
<dbReference type="STRING" id="266265.Bxe_A4505"/>
<dbReference type="KEGG" id="bxb:DR64_2180"/>
<dbReference type="KEGG" id="bxe:Bxe_A4505"/>
<dbReference type="PATRIC" id="fig|266265.5.peg.4612"/>
<dbReference type="eggNOG" id="COG0665">
    <property type="taxonomic scope" value="Bacteria"/>
</dbReference>
<dbReference type="eggNOG" id="COG4121">
    <property type="taxonomic scope" value="Bacteria"/>
</dbReference>
<dbReference type="OrthoDB" id="9786494at2"/>
<dbReference type="Proteomes" id="UP000001817">
    <property type="component" value="Chromosome 1"/>
</dbReference>
<dbReference type="GO" id="GO:0005737">
    <property type="term" value="C:cytoplasm"/>
    <property type="evidence" value="ECO:0007669"/>
    <property type="project" value="UniProtKB-SubCell"/>
</dbReference>
<dbReference type="GO" id="GO:0050660">
    <property type="term" value="F:flavin adenine dinucleotide binding"/>
    <property type="evidence" value="ECO:0007669"/>
    <property type="project" value="UniProtKB-UniRule"/>
</dbReference>
<dbReference type="GO" id="GO:0016645">
    <property type="term" value="F:oxidoreductase activity, acting on the CH-NH group of donors"/>
    <property type="evidence" value="ECO:0007669"/>
    <property type="project" value="InterPro"/>
</dbReference>
<dbReference type="GO" id="GO:0004808">
    <property type="term" value="F:tRNA (5-methylaminomethyl-2-thiouridylate)(34)-methyltransferase activity"/>
    <property type="evidence" value="ECO:0007669"/>
    <property type="project" value="UniProtKB-EC"/>
</dbReference>
<dbReference type="GO" id="GO:0032259">
    <property type="term" value="P:methylation"/>
    <property type="evidence" value="ECO:0007669"/>
    <property type="project" value="UniProtKB-KW"/>
</dbReference>
<dbReference type="GO" id="GO:0002097">
    <property type="term" value="P:tRNA wobble base modification"/>
    <property type="evidence" value="ECO:0007669"/>
    <property type="project" value="UniProtKB-UniRule"/>
</dbReference>
<dbReference type="Gene3D" id="3.30.9.10">
    <property type="entry name" value="D-Amino Acid Oxidase, subunit A, domain 2"/>
    <property type="match status" value="1"/>
</dbReference>
<dbReference type="Gene3D" id="3.50.50.60">
    <property type="entry name" value="FAD/NAD(P)-binding domain"/>
    <property type="match status" value="1"/>
</dbReference>
<dbReference type="Gene3D" id="3.40.50.150">
    <property type="entry name" value="Vaccinia Virus protein VP39"/>
    <property type="match status" value="1"/>
</dbReference>
<dbReference type="HAMAP" id="MF_01102">
    <property type="entry name" value="MnmC"/>
    <property type="match status" value="1"/>
</dbReference>
<dbReference type="InterPro" id="IPR006076">
    <property type="entry name" value="FAD-dep_OxRdtase"/>
</dbReference>
<dbReference type="InterPro" id="IPR036188">
    <property type="entry name" value="FAD/NAD-bd_sf"/>
</dbReference>
<dbReference type="InterPro" id="IPR008471">
    <property type="entry name" value="MnmC-like_methylTransf"/>
</dbReference>
<dbReference type="InterPro" id="IPR029063">
    <property type="entry name" value="SAM-dependent_MTases_sf"/>
</dbReference>
<dbReference type="InterPro" id="IPR023032">
    <property type="entry name" value="tRNA_MAMT_biosynth_bifunc_MnmC"/>
</dbReference>
<dbReference type="InterPro" id="IPR047785">
    <property type="entry name" value="tRNA_MNMC2"/>
</dbReference>
<dbReference type="InterPro" id="IPR017610">
    <property type="entry name" value="tRNA_S-uridine_synth_MnmC_C"/>
</dbReference>
<dbReference type="NCBIfam" id="TIGR03197">
    <property type="entry name" value="MnmC_Cterm"/>
    <property type="match status" value="1"/>
</dbReference>
<dbReference type="NCBIfam" id="NF002481">
    <property type="entry name" value="PRK01747.1-2"/>
    <property type="match status" value="1"/>
</dbReference>
<dbReference type="NCBIfam" id="NF002483">
    <property type="entry name" value="PRK01747.1-4"/>
    <property type="match status" value="1"/>
</dbReference>
<dbReference type="NCBIfam" id="NF033855">
    <property type="entry name" value="tRNA_MNMC2"/>
    <property type="match status" value="1"/>
</dbReference>
<dbReference type="PANTHER" id="PTHR13847">
    <property type="entry name" value="SARCOSINE DEHYDROGENASE-RELATED"/>
    <property type="match status" value="1"/>
</dbReference>
<dbReference type="PANTHER" id="PTHR13847:SF283">
    <property type="entry name" value="TRNA 5-METHYLAMINOMETHYL-2-THIOURIDINE BIOSYNTHESIS BIFUNCTIONAL PROTEIN MNMC"/>
    <property type="match status" value="1"/>
</dbReference>
<dbReference type="Pfam" id="PF01266">
    <property type="entry name" value="DAO"/>
    <property type="match status" value="1"/>
</dbReference>
<dbReference type="Pfam" id="PF05430">
    <property type="entry name" value="Methyltransf_30"/>
    <property type="match status" value="1"/>
</dbReference>
<dbReference type="SUPFAM" id="SSF54373">
    <property type="entry name" value="FAD-linked reductases, C-terminal domain"/>
    <property type="match status" value="1"/>
</dbReference>
<dbReference type="SUPFAM" id="SSF51905">
    <property type="entry name" value="FAD/NAD(P)-binding domain"/>
    <property type="match status" value="1"/>
</dbReference>
<comment type="function">
    <text evidence="1">Catalyzes the last two steps in the biosynthesis of 5-methylaminomethyl-2-thiouridine (mnm(5)s(2)U) at the wobble position (U34) in tRNA. Catalyzes the FAD-dependent demodification of cmnm(5)s(2)U34 to nm(5)s(2)U34, followed by the transfer of a methyl group from S-adenosyl-L-methionine to nm(5)s(2)U34, to form mnm(5)s(2)U34.</text>
</comment>
<comment type="catalytic activity">
    <reaction evidence="1">
        <text>5-aminomethyl-2-thiouridine(34) in tRNA + S-adenosyl-L-methionine = 5-methylaminomethyl-2-thiouridine(34) in tRNA + S-adenosyl-L-homocysteine + H(+)</text>
        <dbReference type="Rhea" id="RHEA:19569"/>
        <dbReference type="Rhea" id="RHEA-COMP:10195"/>
        <dbReference type="Rhea" id="RHEA-COMP:10197"/>
        <dbReference type="ChEBI" id="CHEBI:15378"/>
        <dbReference type="ChEBI" id="CHEBI:57856"/>
        <dbReference type="ChEBI" id="CHEBI:59789"/>
        <dbReference type="ChEBI" id="CHEBI:74454"/>
        <dbReference type="ChEBI" id="CHEBI:74455"/>
        <dbReference type="EC" id="2.1.1.61"/>
    </reaction>
</comment>
<comment type="cofactor">
    <cofactor evidence="1">
        <name>FAD</name>
        <dbReference type="ChEBI" id="CHEBI:57692"/>
    </cofactor>
</comment>
<comment type="subcellular location">
    <subcellularLocation>
        <location evidence="1">Cytoplasm</location>
    </subcellularLocation>
</comment>
<comment type="similarity">
    <text evidence="1">In the N-terminal section; belongs to the methyltransferase superfamily. tRNA (mnm(5)s(2)U34)-methyltransferase family.</text>
</comment>
<comment type="similarity">
    <text evidence="1">In the C-terminal section; belongs to the DAO family.</text>
</comment>
<gene>
    <name evidence="1" type="primary">mnmC</name>
    <name type="ordered locus">Bxeno_A4389</name>
    <name type="ORF">Bxe_A4505</name>
</gene>
<feature type="chain" id="PRO_0000347966" description="tRNA 5-methylaminomethyl-2-thiouridine biosynthesis bifunctional protein MnmC">
    <location>
        <begin position="1"/>
        <end position="656"/>
    </location>
</feature>
<feature type="region of interest" description="tRNA (mnm(5)s(2)U34)-methyltransferase">
    <location>
        <begin position="1"/>
        <end position="236"/>
    </location>
</feature>
<feature type="region of interest" description="FAD-dependent cmnm(5)s(2)U34 oxidoreductase">
    <location>
        <begin position="260"/>
        <end position="656"/>
    </location>
</feature>